<protein>
    <recommendedName>
        <fullName>Uncharacterized protein Lin0241</fullName>
    </recommendedName>
</protein>
<reference key="1">
    <citation type="journal article" date="2001" name="Science">
        <title>Comparative genomics of Listeria species.</title>
        <authorList>
            <person name="Glaser P."/>
            <person name="Frangeul L."/>
            <person name="Buchrieser C."/>
            <person name="Rusniok C."/>
            <person name="Amend A."/>
            <person name="Baquero F."/>
            <person name="Berche P."/>
            <person name="Bloecker H."/>
            <person name="Brandt P."/>
            <person name="Chakraborty T."/>
            <person name="Charbit A."/>
            <person name="Chetouani F."/>
            <person name="Couve E."/>
            <person name="de Daruvar A."/>
            <person name="Dehoux P."/>
            <person name="Domann E."/>
            <person name="Dominguez-Bernal G."/>
            <person name="Duchaud E."/>
            <person name="Durant L."/>
            <person name="Dussurget O."/>
            <person name="Entian K.-D."/>
            <person name="Fsihi H."/>
            <person name="Garcia-del Portillo F."/>
            <person name="Garrido P."/>
            <person name="Gautier L."/>
            <person name="Goebel W."/>
            <person name="Gomez-Lopez N."/>
            <person name="Hain T."/>
            <person name="Hauf J."/>
            <person name="Jackson D."/>
            <person name="Jones L.-M."/>
            <person name="Kaerst U."/>
            <person name="Kreft J."/>
            <person name="Kuhn M."/>
            <person name="Kunst F."/>
            <person name="Kurapkat G."/>
            <person name="Madueno E."/>
            <person name="Maitournam A."/>
            <person name="Mata Vicente J."/>
            <person name="Ng E."/>
            <person name="Nedjari H."/>
            <person name="Nordsiek G."/>
            <person name="Novella S."/>
            <person name="de Pablos B."/>
            <person name="Perez-Diaz J.-C."/>
            <person name="Purcell R."/>
            <person name="Remmel B."/>
            <person name="Rose M."/>
            <person name="Schlueter T."/>
            <person name="Simoes N."/>
            <person name="Tierrez A."/>
            <person name="Vazquez-Boland J.-A."/>
            <person name="Voss H."/>
            <person name="Wehland J."/>
            <person name="Cossart P."/>
        </authorList>
    </citation>
    <scope>NUCLEOTIDE SEQUENCE [LARGE SCALE GENOMIC DNA]</scope>
    <source>
        <strain>ATCC BAA-680 / CLIP 11262</strain>
    </source>
</reference>
<organism>
    <name type="scientific">Listeria innocua serovar 6a (strain ATCC BAA-680 / CLIP 11262)</name>
    <dbReference type="NCBI Taxonomy" id="272626"/>
    <lineage>
        <taxon>Bacteria</taxon>
        <taxon>Bacillati</taxon>
        <taxon>Bacillota</taxon>
        <taxon>Bacilli</taxon>
        <taxon>Bacillales</taxon>
        <taxon>Listeriaceae</taxon>
        <taxon>Listeria</taxon>
    </lineage>
</organism>
<feature type="chain" id="PRO_0000210817" description="Uncharacterized protein Lin0241">
    <location>
        <begin position="1"/>
        <end position="224"/>
    </location>
</feature>
<name>Y241_LISIN</name>
<sequence>MITFDQLDTELQALENPNTIKIFRNHGCPDSLDLYGLKIGDLKKIIRREKLTKNHELAVELIESNNSDLIYLGLLAVNPNKVTTEQIEKWNVAFRETWSQLTFGLASIVSKRDDALLFAKKWIESEYDLTKSMGWQIYSEHINNLPEAEALLQRAKETLQSESNRTRYSMNGFIITCGIYKDDLHEKAIEAAKSVGKVHVNLGKTSCKVPDAISYIEKARNRVN</sequence>
<proteinExistence type="predicted"/>
<gene>
    <name type="ordered locus">lin0241</name>
</gene>
<accession>Q92F66</accession>
<dbReference type="EMBL" id="AL596164">
    <property type="protein sequence ID" value="CAC95474.1"/>
    <property type="molecule type" value="Genomic_DNA"/>
</dbReference>
<dbReference type="PIR" id="AB1463">
    <property type="entry name" value="AB1463"/>
</dbReference>
<dbReference type="RefSeq" id="WP_010990292.1">
    <property type="nucleotide sequence ID" value="NC_003212.1"/>
</dbReference>
<dbReference type="SMR" id="Q92F66"/>
<dbReference type="STRING" id="272626.gene:17564553"/>
<dbReference type="GeneID" id="93233676"/>
<dbReference type="KEGG" id="lin:lin0241"/>
<dbReference type="eggNOG" id="COG4912">
    <property type="taxonomic scope" value="Bacteria"/>
</dbReference>
<dbReference type="HOGENOM" id="CLU_061369_2_0_9"/>
<dbReference type="OrthoDB" id="9801369at2"/>
<dbReference type="Proteomes" id="UP000002513">
    <property type="component" value="Chromosome"/>
</dbReference>
<dbReference type="CDD" id="cd06561">
    <property type="entry name" value="AlkD_like"/>
    <property type="match status" value="1"/>
</dbReference>
<dbReference type="InterPro" id="IPR016024">
    <property type="entry name" value="ARM-type_fold"/>
</dbReference>
<dbReference type="InterPro" id="IPR014825">
    <property type="entry name" value="DNA_alkylation"/>
</dbReference>
<dbReference type="PANTHER" id="PTHR41291">
    <property type="entry name" value="DNA ALKYLATION REPAIR PROTEIN"/>
    <property type="match status" value="1"/>
</dbReference>
<dbReference type="PANTHER" id="PTHR41291:SF1">
    <property type="entry name" value="DNA ALKYLATION REPAIR PROTEIN"/>
    <property type="match status" value="1"/>
</dbReference>
<dbReference type="Pfam" id="PF08713">
    <property type="entry name" value="DNA_alkylation"/>
    <property type="match status" value="1"/>
</dbReference>
<dbReference type="SUPFAM" id="SSF48371">
    <property type="entry name" value="ARM repeat"/>
    <property type="match status" value="1"/>
</dbReference>